<accession>Q1LMC7</accession>
<name>PURT_CUPMC</name>
<keyword id="KW-0067">ATP-binding</keyword>
<keyword id="KW-0436">Ligase</keyword>
<keyword id="KW-0460">Magnesium</keyword>
<keyword id="KW-0479">Metal-binding</keyword>
<keyword id="KW-0547">Nucleotide-binding</keyword>
<keyword id="KW-0658">Purine biosynthesis</keyword>
<keyword id="KW-1185">Reference proteome</keyword>
<feature type="chain" id="PRO_0000319221" description="Formate-dependent phosphoribosylglycinamide formyltransferase">
    <location>
        <begin position="1"/>
        <end position="400"/>
    </location>
</feature>
<feature type="domain" description="ATP-grasp" evidence="1">
    <location>
        <begin position="120"/>
        <end position="315"/>
    </location>
</feature>
<feature type="binding site" evidence="1">
    <location>
        <begin position="22"/>
        <end position="23"/>
    </location>
    <ligand>
        <name>N(1)-(5-phospho-beta-D-ribosyl)glycinamide</name>
        <dbReference type="ChEBI" id="CHEBI:143788"/>
    </ligand>
</feature>
<feature type="binding site" evidence="1">
    <location>
        <position position="82"/>
    </location>
    <ligand>
        <name>N(1)-(5-phospho-beta-D-ribosyl)glycinamide</name>
        <dbReference type="ChEBI" id="CHEBI:143788"/>
    </ligand>
</feature>
<feature type="binding site" evidence="1">
    <location>
        <position position="115"/>
    </location>
    <ligand>
        <name>ATP</name>
        <dbReference type="ChEBI" id="CHEBI:30616"/>
    </ligand>
</feature>
<feature type="binding site" evidence="1">
    <location>
        <position position="157"/>
    </location>
    <ligand>
        <name>ATP</name>
        <dbReference type="ChEBI" id="CHEBI:30616"/>
    </ligand>
</feature>
<feature type="binding site" evidence="1">
    <location>
        <begin position="162"/>
        <end position="167"/>
    </location>
    <ligand>
        <name>ATP</name>
        <dbReference type="ChEBI" id="CHEBI:30616"/>
    </ligand>
</feature>
<feature type="binding site" evidence="1">
    <location>
        <begin position="197"/>
        <end position="200"/>
    </location>
    <ligand>
        <name>ATP</name>
        <dbReference type="ChEBI" id="CHEBI:30616"/>
    </ligand>
</feature>
<feature type="binding site" evidence="1">
    <location>
        <position position="205"/>
    </location>
    <ligand>
        <name>ATP</name>
        <dbReference type="ChEBI" id="CHEBI:30616"/>
    </ligand>
</feature>
<feature type="binding site" evidence="1">
    <location>
        <position position="274"/>
    </location>
    <ligand>
        <name>Mg(2+)</name>
        <dbReference type="ChEBI" id="CHEBI:18420"/>
    </ligand>
</feature>
<feature type="binding site" evidence="1">
    <location>
        <position position="286"/>
    </location>
    <ligand>
        <name>Mg(2+)</name>
        <dbReference type="ChEBI" id="CHEBI:18420"/>
    </ligand>
</feature>
<feature type="binding site" evidence="1">
    <location>
        <position position="293"/>
    </location>
    <ligand>
        <name>N(1)-(5-phospho-beta-D-ribosyl)glycinamide</name>
        <dbReference type="ChEBI" id="CHEBI:143788"/>
    </ligand>
</feature>
<feature type="binding site" evidence="1">
    <location>
        <position position="362"/>
    </location>
    <ligand>
        <name>N(1)-(5-phospho-beta-D-ribosyl)glycinamide</name>
        <dbReference type="ChEBI" id="CHEBI:143788"/>
    </ligand>
</feature>
<feature type="binding site" evidence="1">
    <location>
        <begin position="369"/>
        <end position="370"/>
    </location>
    <ligand>
        <name>N(1)-(5-phospho-beta-D-ribosyl)glycinamide</name>
        <dbReference type="ChEBI" id="CHEBI:143788"/>
    </ligand>
</feature>
<dbReference type="EC" id="6.3.1.21" evidence="1"/>
<dbReference type="EMBL" id="CP000352">
    <property type="protein sequence ID" value="ABF08699.1"/>
    <property type="molecule type" value="Genomic_DNA"/>
</dbReference>
<dbReference type="RefSeq" id="WP_011516549.1">
    <property type="nucleotide sequence ID" value="NC_007973.1"/>
</dbReference>
<dbReference type="SMR" id="Q1LMC7"/>
<dbReference type="STRING" id="266264.Rmet_1820"/>
<dbReference type="KEGG" id="rme:Rmet_1820"/>
<dbReference type="eggNOG" id="COG0027">
    <property type="taxonomic scope" value="Bacteria"/>
</dbReference>
<dbReference type="HOGENOM" id="CLU_011534_1_3_4"/>
<dbReference type="UniPathway" id="UPA00074">
    <property type="reaction ID" value="UER00127"/>
</dbReference>
<dbReference type="Proteomes" id="UP000002429">
    <property type="component" value="Chromosome"/>
</dbReference>
<dbReference type="GO" id="GO:0005829">
    <property type="term" value="C:cytosol"/>
    <property type="evidence" value="ECO:0007669"/>
    <property type="project" value="TreeGrafter"/>
</dbReference>
<dbReference type="GO" id="GO:0005524">
    <property type="term" value="F:ATP binding"/>
    <property type="evidence" value="ECO:0007669"/>
    <property type="project" value="UniProtKB-UniRule"/>
</dbReference>
<dbReference type="GO" id="GO:0000287">
    <property type="term" value="F:magnesium ion binding"/>
    <property type="evidence" value="ECO:0007669"/>
    <property type="project" value="InterPro"/>
</dbReference>
<dbReference type="GO" id="GO:0043815">
    <property type="term" value="F:phosphoribosylglycinamide formyltransferase 2 activity"/>
    <property type="evidence" value="ECO:0007669"/>
    <property type="project" value="UniProtKB-UniRule"/>
</dbReference>
<dbReference type="GO" id="GO:0004644">
    <property type="term" value="F:phosphoribosylglycinamide formyltransferase activity"/>
    <property type="evidence" value="ECO:0007669"/>
    <property type="project" value="InterPro"/>
</dbReference>
<dbReference type="GO" id="GO:0006189">
    <property type="term" value="P:'de novo' IMP biosynthetic process"/>
    <property type="evidence" value="ECO:0007669"/>
    <property type="project" value="UniProtKB-UniRule"/>
</dbReference>
<dbReference type="Gene3D" id="3.40.50.20">
    <property type="match status" value="1"/>
</dbReference>
<dbReference type="Gene3D" id="3.30.1490.20">
    <property type="entry name" value="ATP-grasp fold, A domain"/>
    <property type="match status" value="1"/>
</dbReference>
<dbReference type="Gene3D" id="3.30.470.20">
    <property type="entry name" value="ATP-grasp fold, B domain"/>
    <property type="match status" value="1"/>
</dbReference>
<dbReference type="HAMAP" id="MF_01643">
    <property type="entry name" value="PurT"/>
    <property type="match status" value="1"/>
</dbReference>
<dbReference type="InterPro" id="IPR011761">
    <property type="entry name" value="ATP-grasp"/>
</dbReference>
<dbReference type="InterPro" id="IPR003135">
    <property type="entry name" value="ATP-grasp_carboxylate-amine"/>
</dbReference>
<dbReference type="InterPro" id="IPR013815">
    <property type="entry name" value="ATP_grasp_subdomain_1"/>
</dbReference>
<dbReference type="InterPro" id="IPR016185">
    <property type="entry name" value="PreATP-grasp_dom_sf"/>
</dbReference>
<dbReference type="InterPro" id="IPR005862">
    <property type="entry name" value="PurT"/>
</dbReference>
<dbReference type="InterPro" id="IPR054350">
    <property type="entry name" value="PurT/PurK_preATP-grasp"/>
</dbReference>
<dbReference type="InterPro" id="IPR048740">
    <property type="entry name" value="PurT_C"/>
</dbReference>
<dbReference type="InterPro" id="IPR011054">
    <property type="entry name" value="Rudment_hybrid_motif"/>
</dbReference>
<dbReference type="NCBIfam" id="NF006766">
    <property type="entry name" value="PRK09288.1"/>
    <property type="match status" value="1"/>
</dbReference>
<dbReference type="NCBIfam" id="TIGR01142">
    <property type="entry name" value="purT"/>
    <property type="match status" value="1"/>
</dbReference>
<dbReference type="PANTHER" id="PTHR43055">
    <property type="entry name" value="FORMATE-DEPENDENT PHOSPHORIBOSYLGLYCINAMIDE FORMYLTRANSFERASE"/>
    <property type="match status" value="1"/>
</dbReference>
<dbReference type="PANTHER" id="PTHR43055:SF1">
    <property type="entry name" value="FORMATE-DEPENDENT PHOSPHORIBOSYLGLYCINAMIDE FORMYLTRANSFERASE"/>
    <property type="match status" value="1"/>
</dbReference>
<dbReference type="Pfam" id="PF02222">
    <property type="entry name" value="ATP-grasp"/>
    <property type="match status" value="1"/>
</dbReference>
<dbReference type="Pfam" id="PF21244">
    <property type="entry name" value="PurT_C"/>
    <property type="match status" value="1"/>
</dbReference>
<dbReference type="Pfam" id="PF22660">
    <property type="entry name" value="RS_preATP-grasp-like"/>
    <property type="match status" value="1"/>
</dbReference>
<dbReference type="SUPFAM" id="SSF56059">
    <property type="entry name" value="Glutathione synthetase ATP-binding domain-like"/>
    <property type="match status" value="1"/>
</dbReference>
<dbReference type="SUPFAM" id="SSF52440">
    <property type="entry name" value="PreATP-grasp domain"/>
    <property type="match status" value="1"/>
</dbReference>
<dbReference type="SUPFAM" id="SSF51246">
    <property type="entry name" value="Rudiment single hybrid motif"/>
    <property type="match status" value="1"/>
</dbReference>
<dbReference type="PROSITE" id="PS50975">
    <property type="entry name" value="ATP_GRASP"/>
    <property type="match status" value="1"/>
</dbReference>
<sequence>MTTLGTPLSPSATKVMLLGSGELGKEVLIALQRLGVETIAVDRYENAPGQQVAHHARTITMSDGEQLKALIEAERPDLVVPEIEAIATPMLEALEAAGVVRVIPTARAARLTMDREGIRRLAAETLGLPTSPYKFCDSLEELQAAIDGGIGYPCVVKPVMSSSGKGQSKIDGPADVKAAWDYAMAGGRVSHGRVIVEGFIDFDYEITLLTVRAVGANGEVETHFCEPIGHVQVAGDYVESWQPHPMHPKALETSQHIARAVTADLGGQGLFGVELFVKGEQVWFSEVSPRPHDTGMVTMITQWQNEFELHARAILGLPVSTALRAPGASAVIYGGVEAEGIVFDGVDEALRVPQTELRLFGKPESFTKRRMGVALAYAEDVDTARERAKEAAGKVKPRKA</sequence>
<protein>
    <recommendedName>
        <fullName evidence="1">Formate-dependent phosphoribosylglycinamide formyltransferase</fullName>
        <ecNumber evidence="1">6.3.1.21</ecNumber>
    </recommendedName>
    <alternativeName>
        <fullName evidence="1">5'-phosphoribosylglycinamide transformylase 2</fullName>
    </alternativeName>
    <alternativeName>
        <fullName evidence="1">Formate-dependent GAR transformylase</fullName>
    </alternativeName>
    <alternativeName>
        <fullName evidence="1">GAR transformylase 2</fullName>
        <shortName evidence="1">GART 2</shortName>
    </alternativeName>
    <alternativeName>
        <fullName evidence="1">Non-folate glycinamide ribonucleotide transformylase</fullName>
    </alternativeName>
    <alternativeName>
        <fullName evidence="1">Phosphoribosylglycinamide formyltransferase 2</fullName>
    </alternativeName>
</protein>
<gene>
    <name evidence="1" type="primary">purT</name>
    <name type="ordered locus">Rmet_1820</name>
</gene>
<comment type="function">
    <text evidence="1">Involved in the de novo purine biosynthesis. Catalyzes the transfer of formate to 5-phospho-ribosyl-glycinamide (GAR), producing 5-phospho-ribosyl-N-formylglycinamide (FGAR). Formate is provided by PurU via hydrolysis of 10-formyl-tetrahydrofolate.</text>
</comment>
<comment type="catalytic activity">
    <reaction evidence="1">
        <text>N(1)-(5-phospho-beta-D-ribosyl)glycinamide + formate + ATP = N(2)-formyl-N(1)-(5-phospho-beta-D-ribosyl)glycinamide + ADP + phosphate + H(+)</text>
        <dbReference type="Rhea" id="RHEA:24829"/>
        <dbReference type="ChEBI" id="CHEBI:15378"/>
        <dbReference type="ChEBI" id="CHEBI:15740"/>
        <dbReference type="ChEBI" id="CHEBI:30616"/>
        <dbReference type="ChEBI" id="CHEBI:43474"/>
        <dbReference type="ChEBI" id="CHEBI:143788"/>
        <dbReference type="ChEBI" id="CHEBI:147286"/>
        <dbReference type="ChEBI" id="CHEBI:456216"/>
        <dbReference type="EC" id="6.3.1.21"/>
    </reaction>
    <physiologicalReaction direction="left-to-right" evidence="1">
        <dbReference type="Rhea" id="RHEA:24830"/>
    </physiologicalReaction>
</comment>
<comment type="pathway">
    <text evidence="1">Purine metabolism; IMP biosynthesis via de novo pathway; N(2)-formyl-N(1)-(5-phospho-D-ribosyl)glycinamide from N(1)-(5-phospho-D-ribosyl)glycinamide (formate route): step 1/1.</text>
</comment>
<comment type="subunit">
    <text evidence="1">Homodimer.</text>
</comment>
<comment type="similarity">
    <text evidence="1">Belongs to the PurK/PurT family.</text>
</comment>
<organism>
    <name type="scientific">Cupriavidus metallidurans (strain ATCC 43123 / DSM 2839 / NBRC 102507 / CH34)</name>
    <name type="common">Ralstonia metallidurans</name>
    <dbReference type="NCBI Taxonomy" id="266264"/>
    <lineage>
        <taxon>Bacteria</taxon>
        <taxon>Pseudomonadati</taxon>
        <taxon>Pseudomonadota</taxon>
        <taxon>Betaproteobacteria</taxon>
        <taxon>Burkholderiales</taxon>
        <taxon>Burkholderiaceae</taxon>
        <taxon>Cupriavidus</taxon>
    </lineage>
</organism>
<proteinExistence type="inferred from homology"/>
<evidence type="ECO:0000255" key="1">
    <source>
        <dbReference type="HAMAP-Rule" id="MF_01643"/>
    </source>
</evidence>
<reference key="1">
    <citation type="journal article" date="2010" name="PLoS ONE">
        <title>The complete genome sequence of Cupriavidus metallidurans strain CH34, a master survivalist in harsh and anthropogenic environments.</title>
        <authorList>
            <person name="Janssen P.J."/>
            <person name="Van Houdt R."/>
            <person name="Moors H."/>
            <person name="Monsieurs P."/>
            <person name="Morin N."/>
            <person name="Michaux A."/>
            <person name="Benotmane M.A."/>
            <person name="Leys N."/>
            <person name="Vallaeys T."/>
            <person name="Lapidus A."/>
            <person name="Monchy S."/>
            <person name="Medigue C."/>
            <person name="Taghavi S."/>
            <person name="McCorkle S."/>
            <person name="Dunn J."/>
            <person name="van der Lelie D."/>
            <person name="Mergeay M."/>
        </authorList>
    </citation>
    <scope>NUCLEOTIDE SEQUENCE [LARGE SCALE GENOMIC DNA]</scope>
    <source>
        <strain>ATCC 43123 / DSM 2839 / NBRC 102507 / CH34</strain>
    </source>
</reference>